<evidence type="ECO:0000255" key="1">
    <source>
        <dbReference type="HAMAP-Rule" id="MF_00098"/>
    </source>
</evidence>
<gene>
    <name evidence="1" type="primary">metG</name>
    <name type="ordered locus">Sputcn32_2220</name>
</gene>
<proteinExistence type="inferred from homology"/>
<organism>
    <name type="scientific">Shewanella putrefaciens (strain CN-32 / ATCC BAA-453)</name>
    <dbReference type="NCBI Taxonomy" id="319224"/>
    <lineage>
        <taxon>Bacteria</taxon>
        <taxon>Pseudomonadati</taxon>
        <taxon>Pseudomonadota</taxon>
        <taxon>Gammaproteobacteria</taxon>
        <taxon>Alteromonadales</taxon>
        <taxon>Shewanellaceae</taxon>
        <taxon>Shewanella</taxon>
    </lineage>
</organism>
<feature type="chain" id="PRO_0000331908" description="Methionine--tRNA ligase">
    <location>
        <begin position="1"/>
        <end position="689"/>
    </location>
</feature>
<feature type="domain" description="tRNA-binding" evidence="1">
    <location>
        <begin position="588"/>
        <end position="689"/>
    </location>
</feature>
<feature type="short sequence motif" description="'HIGH' region">
    <location>
        <begin position="15"/>
        <end position="25"/>
    </location>
</feature>
<feature type="short sequence motif" description="'KMSKS' region">
    <location>
        <begin position="332"/>
        <end position="336"/>
    </location>
</feature>
<feature type="binding site" evidence="1">
    <location>
        <position position="146"/>
    </location>
    <ligand>
        <name>Zn(2+)</name>
        <dbReference type="ChEBI" id="CHEBI:29105"/>
    </ligand>
</feature>
<feature type="binding site" evidence="1">
    <location>
        <position position="149"/>
    </location>
    <ligand>
        <name>Zn(2+)</name>
        <dbReference type="ChEBI" id="CHEBI:29105"/>
    </ligand>
</feature>
<feature type="binding site" evidence="1">
    <location>
        <position position="159"/>
    </location>
    <ligand>
        <name>Zn(2+)</name>
        <dbReference type="ChEBI" id="CHEBI:29105"/>
    </ligand>
</feature>
<feature type="binding site" evidence="1">
    <location>
        <position position="162"/>
    </location>
    <ligand>
        <name>Zn(2+)</name>
        <dbReference type="ChEBI" id="CHEBI:29105"/>
    </ligand>
</feature>
<feature type="binding site" evidence="1">
    <location>
        <position position="335"/>
    </location>
    <ligand>
        <name>ATP</name>
        <dbReference type="ChEBI" id="CHEBI:30616"/>
    </ligand>
</feature>
<reference key="1">
    <citation type="submission" date="2007-04" db="EMBL/GenBank/DDBJ databases">
        <title>Complete sequence of Shewanella putrefaciens CN-32.</title>
        <authorList>
            <consortium name="US DOE Joint Genome Institute"/>
            <person name="Copeland A."/>
            <person name="Lucas S."/>
            <person name="Lapidus A."/>
            <person name="Barry K."/>
            <person name="Detter J.C."/>
            <person name="Glavina del Rio T."/>
            <person name="Hammon N."/>
            <person name="Israni S."/>
            <person name="Dalin E."/>
            <person name="Tice H."/>
            <person name="Pitluck S."/>
            <person name="Chain P."/>
            <person name="Malfatti S."/>
            <person name="Shin M."/>
            <person name="Vergez L."/>
            <person name="Schmutz J."/>
            <person name="Larimer F."/>
            <person name="Land M."/>
            <person name="Hauser L."/>
            <person name="Kyrpides N."/>
            <person name="Mikhailova N."/>
            <person name="Romine M.F."/>
            <person name="Fredrickson J."/>
            <person name="Tiedje J."/>
            <person name="Richardson P."/>
        </authorList>
    </citation>
    <scope>NUCLEOTIDE SEQUENCE [LARGE SCALE GENOMIC DNA]</scope>
    <source>
        <strain>CN-32 / ATCC BAA-453</strain>
    </source>
</reference>
<keyword id="KW-0030">Aminoacyl-tRNA synthetase</keyword>
<keyword id="KW-0067">ATP-binding</keyword>
<keyword id="KW-0963">Cytoplasm</keyword>
<keyword id="KW-0436">Ligase</keyword>
<keyword id="KW-0479">Metal-binding</keyword>
<keyword id="KW-0547">Nucleotide-binding</keyword>
<keyword id="KW-0648">Protein biosynthesis</keyword>
<keyword id="KW-0694">RNA-binding</keyword>
<keyword id="KW-0820">tRNA-binding</keyword>
<keyword id="KW-0862">Zinc</keyword>
<comment type="function">
    <text evidence="1">Is required not only for elongation of protein synthesis but also for the initiation of all mRNA translation through initiator tRNA(fMet) aminoacylation.</text>
</comment>
<comment type="catalytic activity">
    <reaction evidence="1">
        <text>tRNA(Met) + L-methionine + ATP = L-methionyl-tRNA(Met) + AMP + diphosphate</text>
        <dbReference type="Rhea" id="RHEA:13481"/>
        <dbReference type="Rhea" id="RHEA-COMP:9667"/>
        <dbReference type="Rhea" id="RHEA-COMP:9698"/>
        <dbReference type="ChEBI" id="CHEBI:30616"/>
        <dbReference type="ChEBI" id="CHEBI:33019"/>
        <dbReference type="ChEBI" id="CHEBI:57844"/>
        <dbReference type="ChEBI" id="CHEBI:78442"/>
        <dbReference type="ChEBI" id="CHEBI:78530"/>
        <dbReference type="ChEBI" id="CHEBI:456215"/>
        <dbReference type="EC" id="6.1.1.10"/>
    </reaction>
</comment>
<comment type="cofactor">
    <cofactor evidence="1">
        <name>Zn(2+)</name>
        <dbReference type="ChEBI" id="CHEBI:29105"/>
    </cofactor>
    <text evidence="1">Binds 1 zinc ion per subunit.</text>
</comment>
<comment type="subunit">
    <text evidence="1">Homodimer.</text>
</comment>
<comment type="subcellular location">
    <subcellularLocation>
        <location evidence="1">Cytoplasm</location>
    </subcellularLocation>
</comment>
<comment type="similarity">
    <text evidence="1">Belongs to the class-I aminoacyl-tRNA synthetase family. MetG type 1 subfamily.</text>
</comment>
<protein>
    <recommendedName>
        <fullName evidence="1">Methionine--tRNA ligase</fullName>
        <ecNumber evidence="1">6.1.1.10</ecNumber>
    </recommendedName>
    <alternativeName>
        <fullName evidence="1">Methionyl-tRNA synthetase</fullName>
        <shortName evidence="1">MetRS</shortName>
    </alternativeName>
</protein>
<sequence>MATSQRKILVTSALPYANGPIHLGHMLEYIQTDIWSRYQKLRGHECHYICADDAHGTPIMLKAQQLGLAPEEMIAQVNKEHQQDFADFNIAFDNYHSTHSDENRVLASDIYLKLRTNGYIKSKSISQLFDPEKSMFLPDRFVKGTCPKCKSPDQYGDNCDACGATYSPTELINPKSAVSGATPVMKDTEHFFFDLPAFEGMLKEWTRSGALQTEMANKLDEWFEQGLQQWDITRDAPYFGFEIPDAPGKYFYVWLDAPIGYMGSFKNLCDKRPELSFDEFWAKDSKAEVYHFIGKDIVYFHSLFWPAMLHGSGYRQPNSVYAHGYVTVNGAKMSKSKGTFIKARTYLDHLDPEYLRYYYAAKLSSRIDDLDLNLEDFAQRVNSDLVGKLVNLASRTAGFITKRFDGKLAKIADTTLTEAFLAKQEQIAEFYETREYGKAMREIMALADIANGFVADAAPWQMVKQDDQQEAAHQVCSNALNLFRILVTYLKPVLPRLAQDVEAFFQQTLTWDGLAQDMAGHEISPFKAMMQRVELDKVNAMVADSKENLQVTADVPKTAKPEKTVESSNVSSEPLVDDPISETINFDDFAKIDLRIARIVKAEHVAEADKLLKLQLDIGGETRQVFAGIKSAYSPEDLEGKLTVMVANLAPRKMRFGMSEGMVLAAGPGGSDLWILEPHEGAQPGMRVK</sequence>
<accession>A4Y7K8</accession>
<dbReference type="EC" id="6.1.1.10" evidence="1"/>
<dbReference type="EMBL" id="CP000681">
    <property type="protein sequence ID" value="ABP75941.1"/>
    <property type="molecule type" value="Genomic_DNA"/>
</dbReference>
<dbReference type="SMR" id="A4Y7K8"/>
<dbReference type="STRING" id="319224.Sputcn32_2220"/>
<dbReference type="KEGG" id="spc:Sputcn32_2220"/>
<dbReference type="eggNOG" id="COG0073">
    <property type="taxonomic scope" value="Bacteria"/>
</dbReference>
<dbReference type="eggNOG" id="COG0143">
    <property type="taxonomic scope" value="Bacteria"/>
</dbReference>
<dbReference type="HOGENOM" id="CLU_009710_7_0_6"/>
<dbReference type="GO" id="GO:0005829">
    <property type="term" value="C:cytosol"/>
    <property type="evidence" value="ECO:0007669"/>
    <property type="project" value="TreeGrafter"/>
</dbReference>
<dbReference type="GO" id="GO:0005524">
    <property type="term" value="F:ATP binding"/>
    <property type="evidence" value="ECO:0007669"/>
    <property type="project" value="UniProtKB-UniRule"/>
</dbReference>
<dbReference type="GO" id="GO:0046872">
    <property type="term" value="F:metal ion binding"/>
    <property type="evidence" value="ECO:0007669"/>
    <property type="project" value="UniProtKB-KW"/>
</dbReference>
<dbReference type="GO" id="GO:0004825">
    <property type="term" value="F:methionine-tRNA ligase activity"/>
    <property type="evidence" value="ECO:0007669"/>
    <property type="project" value="UniProtKB-UniRule"/>
</dbReference>
<dbReference type="GO" id="GO:0000049">
    <property type="term" value="F:tRNA binding"/>
    <property type="evidence" value="ECO:0007669"/>
    <property type="project" value="UniProtKB-KW"/>
</dbReference>
<dbReference type="GO" id="GO:0006431">
    <property type="term" value="P:methionyl-tRNA aminoacylation"/>
    <property type="evidence" value="ECO:0007669"/>
    <property type="project" value="UniProtKB-UniRule"/>
</dbReference>
<dbReference type="CDD" id="cd07957">
    <property type="entry name" value="Anticodon_Ia_Met"/>
    <property type="match status" value="1"/>
</dbReference>
<dbReference type="CDD" id="cd00814">
    <property type="entry name" value="MetRS_core"/>
    <property type="match status" value="1"/>
</dbReference>
<dbReference type="CDD" id="cd02800">
    <property type="entry name" value="tRNA_bind_EcMetRS_like"/>
    <property type="match status" value="1"/>
</dbReference>
<dbReference type="FunFam" id="1.10.730.10:FF:000005">
    <property type="entry name" value="Methionine--tRNA ligase"/>
    <property type="match status" value="1"/>
</dbReference>
<dbReference type="FunFam" id="2.20.28.20:FF:000001">
    <property type="entry name" value="Methionine--tRNA ligase"/>
    <property type="match status" value="1"/>
</dbReference>
<dbReference type="FunFam" id="2.40.50.140:FF:000042">
    <property type="entry name" value="Methionine--tRNA ligase"/>
    <property type="match status" value="1"/>
</dbReference>
<dbReference type="Gene3D" id="3.40.50.620">
    <property type="entry name" value="HUPs"/>
    <property type="match status" value="1"/>
</dbReference>
<dbReference type="Gene3D" id="1.10.730.10">
    <property type="entry name" value="Isoleucyl-tRNA Synthetase, Domain 1"/>
    <property type="match status" value="1"/>
</dbReference>
<dbReference type="Gene3D" id="2.20.28.20">
    <property type="entry name" value="Methionyl-tRNA synthetase, Zn-domain"/>
    <property type="match status" value="1"/>
</dbReference>
<dbReference type="Gene3D" id="2.40.50.140">
    <property type="entry name" value="Nucleic acid-binding proteins"/>
    <property type="match status" value="1"/>
</dbReference>
<dbReference type="HAMAP" id="MF_00098">
    <property type="entry name" value="Met_tRNA_synth_type1"/>
    <property type="match status" value="1"/>
</dbReference>
<dbReference type="InterPro" id="IPR001412">
    <property type="entry name" value="aa-tRNA-synth_I_CS"/>
</dbReference>
<dbReference type="InterPro" id="IPR041872">
    <property type="entry name" value="Anticodon_Met"/>
</dbReference>
<dbReference type="InterPro" id="IPR004495">
    <property type="entry name" value="Met-tRNA-synth_bsu_C"/>
</dbReference>
<dbReference type="InterPro" id="IPR023458">
    <property type="entry name" value="Met-tRNA_ligase_1"/>
</dbReference>
<dbReference type="InterPro" id="IPR014758">
    <property type="entry name" value="Met-tRNA_synth"/>
</dbReference>
<dbReference type="InterPro" id="IPR015413">
    <property type="entry name" value="Methionyl/Leucyl_tRNA_Synth"/>
</dbReference>
<dbReference type="InterPro" id="IPR033911">
    <property type="entry name" value="MetRS_core"/>
</dbReference>
<dbReference type="InterPro" id="IPR029038">
    <property type="entry name" value="MetRS_Zn"/>
</dbReference>
<dbReference type="InterPro" id="IPR012340">
    <property type="entry name" value="NA-bd_OB-fold"/>
</dbReference>
<dbReference type="InterPro" id="IPR014729">
    <property type="entry name" value="Rossmann-like_a/b/a_fold"/>
</dbReference>
<dbReference type="InterPro" id="IPR002547">
    <property type="entry name" value="tRNA-bd_dom"/>
</dbReference>
<dbReference type="InterPro" id="IPR009080">
    <property type="entry name" value="tRNAsynth_Ia_anticodon-bd"/>
</dbReference>
<dbReference type="NCBIfam" id="TIGR00398">
    <property type="entry name" value="metG"/>
    <property type="match status" value="1"/>
</dbReference>
<dbReference type="NCBIfam" id="TIGR00399">
    <property type="entry name" value="metG_C_term"/>
    <property type="match status" value="1"/>
</dbReference>
<dbReference type="NCBIfam" id="NF001100">
    <property type="entry name" value="PRK00133.1"/>
    <property type="match status" value="1"/>
</dbReference>
<dbReference type="PANTHER" id="PTHR45765">
    <property type="entry name" value="METHIONINE--TRNA LIGASE"/>
    <property type="match status" value="1"/>
</dbReference>
<dbReference type="PANTHER" id="PTHR45765:SF1">
    <property type="entry name" value="METHIONINE--TRNA LIGASE, CYTOPLASMIC"/>
    <property type="match status" value="1"/>
</dbReference>
<dbReference type="Pfam" id="PF19303">
    <property type="entry name" value="Anticodon_3"/>
    <property type="match status" value="1"/>
</dbReference>
<dbReference type="Pfam" id="PF09334">
    <property type="entry name" value="tRNA-synt_1g"/>
    <property type="match status" value="1"/>
</dbReference>
<dbReference type="Pfam" id="PF01588">
    <property type="entry name" value="tRNA_bind"/>
    <property type="match status" value="1"/>
</dbReference>
<dbReference type="PRINTS" id="PR01041">
    <property type="entry name" value="TRNASYNTHMET"/>
</dbReference>
<dbReference type="SUPFAM" id="SSF47323">
    <property type="entry name" value="Anticodon-binding domain of a subclass of class I aminoacyl-tRNA synthetases"/>
    <property type="match status" value="1"/>
</dbReference>
<dbReference type="SUPFAM" id="SSF57770">
    <property type="entry name" value="Methionyl-tRNA synthetase (MetRS), Zn-domain"/>
    <property type="match status" value="1"/>
</dbReference>
<dbReference type="SUPFAM" id="SSF50249">
    <property type="entry name" value="Nucleic acid-binding proteins"/>
    <property type="match status" value="1"/>
</dbReference>
<dbReference type="SUPFAM" id="SSF52374">
    <property type="entry name" value="Nucleotidylyl transferase"/>
    <property type="match status" value="1"/>
</dbReference>
<dbReference type="PROSITE" id="PS00178">
    <property type="entry name" value="AA_TRNA_LIGASE_I"/>
    <property type="match status" value="1"/>
</dbReference>
<dbReference type="PROSITE" id="PS50886">
    <property type="entry name" value="TRBD"/>
    <property type="match status" value="1"/>
</dbReference>
<name>SYM_SHEPC</name>